<comment type="function">
    <text>Diffusible chemotropic factor that induces pollen tube chemotropism.</text>
</comment>
<comment type="tissue specificity">
    <text evidence="3">Strongly expressed in stigma and style and to a lesser extent in leaves, ovary and petals. Not detected in pollen tubes, mature anthers or roots.</text>
</comment>
<comment type="induction">
    <text>Activity enhanced in the presence of stigma/stylar Cys-rich adhesin (SCA).</text>
</comment>
<comment type="mass spectrometry" mass="9898.0" method="Electrospray" evidence="3"/>
<reference key="1">
    <citation type="journal article" date="2003" name="Proc. Natl. Acad. Sci. U.S.A.">
        <title>Chemocyanin, a small basic protein from the lily stigma, induces pollen tube chemotropism.</title>
        <authorList>
            <person name="Kim S."/>
            <person name="Mollet J.-C."/>
            <person name="Dong J."/>
            <person name="Zhang K."/>
            <person name="Park S.-Y."/>
            <person name="Lord E.M."/>
        </authorList>
    </citation>
    <scope>NUCLEOTIDE SEQUENCE [MRNA]</scope>
    <scope>PROTEIN SEQUENCE OF 31-52 AND 56-80</scope>
    <scope>TISSUE SPECIFICITY</scope>
    <scope>MASS SPECTROMETRY</scope>
    <source>
        <strain>cv. Nellie white</strain>
        <tissue>Stigma</tissue>
    </source>
</reference>
<organism>
    <name type="scientific">Lilium longiflorum</name>
    <name type="common">Trumpet lily</name>
    <dbReference type="NCBI Taxonomy" id="4690"/>
    <lineage>
        <taxon>Eukaryota</taxon>
        <taxon>Viridiplantae</taxon>
        <taxon>Streptophyta</taxon>
        <taxon>Embryophyta</taxon>
        <taxon>Tracheophyta</taxon>
        <taxon>Spermatophyta</taxon>
        <taxon>Magnoliopsida</taxon>
        <taxon>Liliopsida</taxon>
        <taxon>Liliales</taxon>
        <taxon>Liliaceae</taxon>
        <taxon>Lilium</taxon>
    </lineage>
</organism>
<keyword id="KW-0186">Copper</keyword>
<keyword id="KW-0903">Direct protein sequencing</keyword>
<keyword id="KW-1015">Disulfide bond</keyword>
<keyword id="KW-0479">Metal-binding</keyword>
<keyword id="KW-0732">Signal</keyword>
<evidence type="ECO:0000255" key="1"/>
<evidence type="ECO:0000255" key="2">
    <source>
        <dbReference type="PROSITE-ProRule" id="PRU00818"/>
    </source>
</evidence>
<evidence type="ECO:0000269" key="3">
    <source>
    </source>
</evidence>
<sequence length="126" mass="12979">MAQGSGSAERALVLGVVLVFLVFNCEVAESVVYTVGDGGGWTFGTSGWPAGKTFRAGDVLVFKYNPAVHNVVSVPAGGYKSCTASPGSRVFKSGDDRITLSRGTNYFICSVPGHCQGGLKIAVTAA</sequence>
<feature type="signal peptide" evidence="1">
    <location>
        <begin position="1"/>
        <end position="30"/>
    </location>
</feature>
<feature type="chain" id="PRO_0000002865" description="Chemocyanin">
    <location>
        <begin position="31"/>
        <end position="126"/>
    </location>
</feature>
<feature type="domain" description="Phytocyanin" evidence="2">
    <location>
        <begin position="31"/>
        <end position="126"/>
    </location>
</feature>
<feature type="binding site" evidence="2">
    <location>
        <position position="69"/>
    </location>
    <ligand>
        <name>Cu cation</name>
        <dbReference type="ChEBI" id="CHEBI:23378"/>
    </ligand>
</feature>
<feature type="binding site" evidence="2">
    <location>
        <position position="109"/>
    </location>
    <ligand>
        <name>Cu cation</name>
        <dbReference type="ChEBI" id="CHEBI:23378"/>
    </ligand>
</feature>
<feature type="binding site" evidence="2">
    <location>
        <position position="114"/>
    </location>
    <ligand>
        <name>Cu cation</name>
        <dbReference type="ChEBI" id="CHEBI:23378"/>
    </ligand>
</feature>
<feature type="disulfide bond" evidence="2">
    <location>
        <begin position="82"/>
        <end position="115"/>
    </location>
</feature>
<accession>P60496</accession>
<dbReference type="EMBL" id="AY425323">
    <property type="protein sequence ID" value="AAR84219.1"/>
    <property type="molecule type" value="mRNA"/>
</dbReference>
<dbReference type="SMR" id="P60496"/>
<dbReference type="GO" id="GO:0005886">
    <property type="term" value="C:plasma membrane"/>
    <property type="evidence" value="ECO:0007669"/>
    <property type="project" value="TreeGrafter"/>
</dbReference>
<dbReference type="GO" id="GO:0009055">
    <property type="term" value="F:electron transfer activity"/>
    <property type="evidence" value="ECO:0007669"/>
    <property type="project" value="InterPro"/>
</dbReference>
<dbReference type="GO" id="GO:0046872">
    <property type="term" value="F:metal ion binding"/>
    <property type="evidence" value="ECO:0007669"/>
    <property type="project" value="UniProtKB-KW"/>
</dbReference>
<dbReference type="CDD" id="cd11013">
    <property type="entry name" value="Plantacyanin"/>
    <property type="match status" value="1"/>
</dbReference>
<dbReference type="FunFam" id="2.60.40.420:FF:000013">
    <property type="entry name" value="basic blue protein-like"/>
    <property type="match status" value="1"/>
</dbReference>
<dbReference type="Gene3D" id="2.60.40.420">
    <property type="entry name" value="Cupredoxins - blue copper proteins"/>
    <property type="match status" value="1"/>
</dbReference>
<dbReference type="InterPro" id="IPR008972">
    <property type="entry name" value="Cupredoxin"/>
</dbReference>
<dbReference type="InterPro" id="IPR039391">
    <property type="entry name" value="Phytocyanin-like"/>
</dbReference>
<dbReference type="InterPro" id="IPR003245">
    <property type="entry name" value="Phytocyanin_dom"/>
</dbReference>
<dbReference type="InterPro" id="IPR041844">
    <property type="entry name" value="Plantacyanin"/>
</dbReference>
<dbReference type="PANTHER" id="PTHR33021">
    <property type="entry name" value="BLUE COPPER PROTEIN"/>
    <property type="match status" value="1"/>
</dbReference>
<dbReference type="PANTHER" id="PTHR33021:SF513">
    <property type="entry name" value="PUTATIVE, EXPRESSED-RELATED"/>
    <property type="match status" value="1"/>
</dbReference>
<dbReference type="Pfam" id="PF02298">
    <property type="entry name" value="Cu_bind_like"/>
    <property type="match status" value="1"/>
</dbReference>
<dbReference type="SUPFAM" id="SSF49503">
    <property type="entry name" value="Cupredoxins"/>
    <property type="match status" value="1"/>
</dbReference>
<dbReference type="PROSITE" id="PS51485">
    <property type="entry name" value="PHYTOCYANIN"/>
    <property type="match status" value="1"/>
</dbReference>
<protein>
    <recommendedName>
        <fullName>Chemocyanin</fullName>
    </recommendedName>
    <alternativeName>
        <fullName>Basic blue protein</fullName>
    </alternativeName>
    <alternativeName>
        <fullName>Plantacyanin</fullName>
    </alternativeName>
</protein>
<proteinExistence type="evidence at protein level"/>
<name>BABL_LILLO</name>